<proteinExistence type="inferred from homology"/>
<reference key="1">
    <citation type="journal article" date="2011" name="J. Bacteriol.">
        <title>Comparative genomics of 28 Salmonella enterica isolates: evidence for CRISPR-mediated adaptive sublineage evolution.</title>
        <authorList>
            <person name="Fricke W.F."/>
            <person name="Mammel M.K."/>
            <person name="McDermott P.F."/>
            <person name="Tartera C."/>
            <person name="White D.G."/>
            <person name="Leclerc J.E."/>
            <person name="Ravel J."/>
            <person name="Cebula T.A."/>
        </authorList>
    </citation>
    <scope>NUCLEOTIDE SEQUENCE [LARGE SCALE GENOMIC DNA]</scope>
    <source>
        <strain>SL483</strain>
    </source>
</reference>
<protein>
    <recommendedName>
        <fullName evidence="1">Methionine--tRNA ligase</fullName>
        <ecNumber evidence="1">6.1.1.10</ecNumber>
    </recommendedName>
    <alternativeName>
        <fullName evidence="1">Methionyl-tRNA synthetase</fullName>
        <shortName evidence="1">MetRS</shortName>
    </alternativeName>
</protein>
<organism>
    <name type="scientific">Salmonella agona (strain SL483)</name>
    <dbReference type="NCBI Taxonomy" id="454166"/>
    <lineage>
        <taxon>Bacteria</taxon>
        <taxon>Pseudomonadati</taxon>
        <taxon>Pseudomonadota</taxon>
        <taxon>Gammaproteobacteria</taxon>
        <taxon>Enterobacterales</taxon>
        <taxon>Enterobacteriaceae</taxon>
        <taxon>Salmonella</taxon>
    </lineage>
</organism>
<keyword id="KW-0030">Aminoacyl-tRNA synthetase</keyword>
<keyword id="KW-0067">ATP-binding</keyword>
<keyword id="KW-0963">Cytoplasm</keyword>
<keyword id="KW-0436">Ligase</keyword>
<keyword id="KW-0479">Metal-binding</keyword>
<keyword id="KW-0547">Nucleotide-binding</keyword>
<keyword id="KW-0648">Protein biosynthesis</keyword>
<keyword id="KW-0694">RNA-binding</keyword>
<keyword id="KW-0820">tRNA-binding</keyword>
<keyword id="KW-0862">Zinc</keyword>
<evidence type="ECO:0000255" key="1">
    <source>
        <dbReference type="HAMAP-Rule" id="MF_00098"/>
    </source>
</evidence>
<comment type="function">
    <text evidence="1">Is required not only for elongation of protein synthesis but also for the initiation of all mRNA translation through initiator tRNA(fMet) aminoacylation.</text>
</comment>
<comment type="catalytic activity">
    <reaction evidence="1">
        <text>tRNA(Met) + L-methionine + ATP = L-methionyl-tRNA(Met) + AMP + diphosphate</text>
        <dbReference type="Rhea" id="RHEA:13481"/>
        <dbReference type="Rhea" id="RHEA-COMP:9667"/>
        <dbReference type="Rhea" id="RHEA-COMP:9698"/>
        <dbReference type="ChEBI" id="CHEBI:30616"/>
        <dbReference type="ChEBI" id="CHEBI:33019"/>
        <dbReference type="ChEBI" id="CHEBI:57844"/>
        <dbReference type="ChEBI" id="CHEBI:78442"/>
        <dbReference type="ChEBI" id="CHEBI:78530"/>
        <dbReference type="ChEBI" id="CHEBI:456215"/>
        <dbReference type="EC" id="6.1.1.10"/>
    </reaction>
</comment>
<comment type="cofactor">
    <cofactor evidence="1">
        <name>Zn(2+)</name>
        <dbReference type="ChEBI" id="CHEBI:29105"/>
    </cofactor>
    <text evidence="1">Binds 1 zinc ion per subunit.</text>
</comment>
<comment type="subunit">
    <text evidence="1">Homodimer.</text>
</comment>
<comment type="subcellular location">
    <subcellularLocation>
        <location evidence="1">Cytoplasm</location>
    </subcellularLocation>
</comment>
<comment type="similarity">
    <text evidence="1">Belongs to the class-I aminoacyl-tRNA synthetase family. MetG type 1 subfamily.</text>
</comment>
<dbReference type="EC" id="6.1.1.10" evidence="1"/>
<dbReference type="EMBL" id="CP001138">
    <property type="protein sequence ID" value="ACH49389.1"/>
    <property type="molecule type" value="Genomic_DNA"/>
</dbReference>
<dbReference type="RefSeq" id="WP_000195330.1">
    <property type="nucleotide sequence ID" value="NC_011149.1"/>
</dbReference>
<dbReference type="SMR" id="B5EXZ5"/>
<dbReference type="KEGG" id="sea:SeAg_B2300"/>
<dbReference type="HOGENOM" id="CLU_009710_7_0_6"/>
<dbReference type="Proteomes" id="UP000008819">
    <property type="component" value="Chromosome"/>
</dbReference>
<dbReference type="GO" id="GO:0005829">
    <property type="term" value="C:cytosol"/>
    <property type="evidence" value="ECO:0007669"/>
    <property type="project" value="TreeGrafter"/>
</dbReference>
<dbReference type="GO" id="GO:0005524">
    <property type="term" value="F:ATP binding"/>
    <property type="evidence" value="ECO:0007669"/>
    <property type="project" value="UniProtKB-UniRule"/>
</dbReference>
<dbReference type="GO" id="GO:0046872">
    <property type="term" value="F:metal ion binding"/>
    <property type="evidence" value="ECO:0007669"/>
    <property type="project" value="UniProtKB-KW"/>
</dbReference>
<dbReference type="GO" id="GO:0004825">
    <property type="term" value="F:methionine-tRNA ligase activity"/>
    <property type="evidence" value="ECO:0007669"/>
    <property type="project" value="UniProtKB-UniRule"/>
</dbReference>
<dbReference type="GO" id="GO:0000049">
    <property type="term" value="F:tRNA binding"/>
    <property type="evidence" value="ECO:0007669"/>
    <property type="project" value="UniProtKB-KW"/>
</dbReference>
<dbReference type="GO" id="GO:0006431">
    <property type="term" value="P:methionyl-tRNA aminoacylation"/>
    <property type="evidence" value="ECO:0007669"/>
    <property type="project" value="UniProtKB-UniRule"/>
</dbReference>
<dbReference type="CDD" id="cd07957">
    <property type="entry name" value="Anticodon_Ia_Met"/>
    <property type="match status" value="1"/>
</dbReference>
<dbReference type="CDD" id="cd00814">
    <property type="entry name" value="MetRS_core"/>
    <property type="match status" value="1"/>
</dbReference>
<dbReference type="CDD" id="cd02800">
    <property type="entry name" value="tRNA_bind_EcMetRS_like"/>
    <property type="match status" value="1"/>
</dbReference>
<dbReference type="FunFam" id="1.10.730.10:FF:000005">
    <property type="entry name" value="Methionine--tRNA ligase"/>
    <property type="match status" value="1"/>
</dbReference>
<dbReference type="FunFam" id="2.20.28.20:FF:000001">
    <property type="entry name" value="Methionine--tRNA ligase"/>
    <property type="match status" value="1"/>
</dbReference>
<dbReference type="FunFam" id="2.40.50.140:FF:000042">
    <property type="entry name" value="Methionine--tRNA ligase"/>
    <property type="match status" value="1"/>
</dbReference>
<dbReference type="Gene3D" id="3.40.50.620">
    <property type="entry name" value="HUPs"/>
    <property type="match status" value="1"/>
</dbReference>
<dbReference type="Gene3D" id="1.10.730.10">
    <property type="entry name" value="Isoleucyl-tRNA Synthetase, Domain 1"/>
    <property type="match status" value="1"/>
</dbReference>
<dbReference type="Gene3D" id="2.20.28.20">
    <property type="entry name" value="Methionyl-tRNA synthetase, Zn-domain"/>
    <property type="match status" value="1"/>
</dbReference>
<dbReference type="Gene3D" id="2.40.50.140">
    <property type="entry name" value="Nucleic acid-binding proteins"/>
    <property type="match status" value="1"/>
</dbReference>
<dbReference type="HAMAP" id="MF_00098">
    <property type="entry name" value="Met_tRNA_synth_type1"/>
    <property type="match status" value="1"/>
</dbReference>
<dbReference type="InterPro" id="IPR001412">
    <property type="entry name" value="aa-tRNA-synth_I_CS"/>
</dbReference>
<dbReference type="InterPro" id="IPR041872">
    <property type="entry name" value="Anticodon_Met"/>
</dbReference>
<dbReference type="InterPro" id="IPR004495">
    <property type="entry name" value="Met-tRNA-synth_bsu_C"/>
</dbReference>
<dbReference type="InterPro" id="IPR023458">
    <property type="entry name" value="Met-tRNA_ligase_1"/>
</dbReference>
<dbReference type="InterPro" id="IPR014758">
    <property type="entry name" value="Met-tRNA_synth"/>
</dbReference>
<dbReference type="InterPro" id="IPR015413">
    <property type="entry name" value="Methionyl/Leucyl_tRNA_Synth"/>
</dbReference>
<dbReference type="InterPro" id="IPR033911">
    <property type="entry name" value="MetRS_core"/>
</dbReference>
<dbReference type="InterPro" id="IPR029038">
    <property type="entry name" value="MetRS_Zn"/>
</dbReference>
<dbReference type="InterPro" id="IPR012340">
    <property type="entry name" value="NA-bd_OB-fold"/>
</dbReference>
<dbReference type="InterPro" id="IPR014729">
    <property type="entry name" value="Rossmann-like_a/b/a_fold"/>
</dbReference>
<dbReference type="InterPro" id="IPR002547">
    <property type="entry name" value="tRNA-bd_dom"/>
</dbReference>
<dbReference type="InterPro" id="IPR009080">
    <property type="entry name" value="tRNAsynth_Ia_anticodon-bd"/>
</dbReference>
<dbReference type="NCBIfam" id="TIGR00398">
    <property type="entry name" value="metG"/>
    <property type="match status" value="1"/>
</dbReference>
<dbReference type="NCBIfam" id="TIGR00399">
    <property type="entry name" value="metG_C_term"/>
    <property type="match status" value="1"/>
</dbReference>
<dbReference type="NCBIfam" id="NF001100">
    <property type="entry name" value="PRK00133.1"/>
    <property type="match status" value="1"/>
</dbReference>
<dbReference type="PANTHER" id="PTHR45765">
    <property type="entry name" value="METHIONINE--TRNA LIGASE"/>
    <property type="match status" value="1"/>
</dbReference>
<dbReference type="PANTHER" id="PTHR45765:SF1">
    <property type="entry name" value="METHIONINE--TRNA LIGASE, CYTOPLASMIC"/>
    <property type="match status" value="1"/>
</dbReference>
<dbReference type="Pfam" id="PF19303">
    <property type="entry name" value="Anticodon_3"/>
    <property type="match status" value="1"/>
</dbReference>
<dbReference type="Pfam" id="PF09334">
    <property type="entry name" value="tRNA-synt_1g"/>
    <property type="match status" value="1"/>
</dbReference>
<dbReference type="Pfam" id="PF01588">
    <property type="entry name" value="tRNA_bind"/>
    <property type="match status" value="1"/>
</dbReference>
<dbReference type="PRINTS" id="PR01041">
    <property type="entry name" value="TRNASYNTHMET"/>
</dbReference>
<dbReference type="SUPFAM" id="SSF47323">
    <property type="entry name" value="Anticodon-binding domain of a subclass of class I aminoacyl-tRNA synthetases"/>
    <property type="match status" value="1"/>
</dbReference>
<dbReference type="SUPFAM" id="SSF57770">
    <property type="entry name" value="Methionyl-tRNA synthetase (MetRS), Zn-domain"/>
    <property type="match status" value="1"/>
</dbReference>
<dbReference type="SUPFAM" id="SSF50249">
    <property type="entry name" value="Nucleic acid-binding proteins"/>
    <property type="match status" value="1"/>
</dbReference>
<dbReference type="SUPFAM" id="SSF52374">
    <property type="entry name" value="Nucleotidylyl transferase"/>
    <property type="match status" value="1"/>
</dbReference>
<dbReference type="PROSITE" id="PS00178">
    <property type="entry name" value="AA_TRNA_LIGASE_I"/>
    <property type="match status" value="1"/>
</dbReference>
<dbReference type="PROSITE" id="PS50886">
    <property type="entry name" value="TRBD"/>
    <property type="match status" value="1"/>
</dbReference>
<accession>B5EXZ5</accession>
<feature type="chain" id="PRO_1000093725" description="Methionine--tRNA ligase">
    <location>
        <begin position="1"/>
        <end position="677"/>
    </location>
</feature>
<feature type="domain" description="tRNA-binding" evidence="1">
    <location>
        <begin position="575"/>
        <end position="677"/>
    </location>
</feature>
<feature type="short sequence motif" description="'HIGH' region">
    <location>
        <begin position="15"/>
        <end position="25"/>
    </location>
</feature>
<feature type="short sequence motif" description="'KMSKS' region">
    <location>
        <begin position="333"/>
        <end position="337"/>
    </location>
</feature>
<feature type="binding site" evidence="1">
    <location>
        <position position="146"/>
    </location>
    <ligand>
        <name>Zn(2+)</name>
        <dbReference type="ChEBI" id="CHEBI:29105"/>
    </ligand>
</feature>
<feature type="binding site" evidence="1">
    <location>
        <position position="149"/>
    </location>
    <ligand>
        <name>Zn(2+)</name>
        <dbReference type="ChEBI" id="CHEBI:29105"/>
    </ligand>
</feature>
<feature type="binding site" evidence="1">
    <location>
        <position position="159"/>
    </location>
    <ligand>
        <name>Zn(2+)</name>
        <dbReference type="ChEBI" id="CHEBI:29105"/>
    </ligand>
</feature>
<feature type="binding site" evidence="1">
    <location>
        <position position="162"/>
    </location>
    <ligand>
        <name>Zn(2+)</name>
        <dbReference type="ChEBI" id="CHEBI:29105"/>
    </ligand>
</feature>
<feature type="binding site" evidence="1">
    <location>
        <position position="336"/>
    </location>
    <ligand>
        <name>ATP</name>
        <dbReference type="ChEBI" id="CHEBI:30616"/>
    </ligand>
</feature>
<name>SYM_SALA4</name>
<sequence>MTQVAKKILVTCALPYANGSIHLGHMLEHIQADVWVRYQRMRGHEVNFICADDAHGTPIMLKAQQLGITPEQMIGEMSQEHQTDFAGFNISYDNYHSTHSDENRELSELIYTRLKENGFIKNRTISQLYDPEKGMFLPDRFVKGTCPKCKSADQYGDNCEVCGATYSPTELIEPKSVVSGATPVMRDSEHFFFDLPSFSEMLQAWTRSGALQEQVANKMQEWFESGLQQWDISRDAPYFGFEIPNAPGKYFYVWLDAPIGYMGSFKNLCDKRGDTTSFDEYWKKDSDAELYHFIGKDIVYFHSLFWPAMLEGSHFRKPTNLFVHGYVTVNGAKMSKSRGTFIKASTWLKHFDADSLRYYYTAKLSSRIDDIDLNLEDFVQRVNADIVNKVVNLASRNAGFINKRFDGVLAAELADPQLYKTFTDAAAVIGEAWESREFGKAIREIMALADIANRYVDEQAPWVVAKQEGRDADLQAICSMGINLFRVLMTYLKPVLPTLSERVEAFLNSELNWDAIEQPLLGHKVNTFKALYNRIDMKQVEALVEASKEEVKAAAAPVTGPLADFPIQETITFDDFAKIDLRVALIENAEFVDGSDKLLRLTLDLGGEKRNVFSGIRSAYPDPQALIGRQTVMVANLAPRKMRFGVSEGMVMAAGPGGKDIFLLSPDDGAKPGQQVK</sequence>
<gene>
    <name evidence="1" type="primary">metG</name>
    <name type="ordered locus">SeAg_B2300</name>
</gene>